<evidence type="ECO:0000250" key="1"/>
<evidence type="ECO:0000255" key="2"/>
<evidence type="ECO:0000305" key="3"/>
<proteinExistence type="evidence at transcript level"/>
<accession>Q2N2K0</accession>
<organism>
    <name type="scientific">Glycine max</name>
    <name type="common">Soybean</name>
    <name type="synonym">Glycine hispida</name>
    <dbReference type="NCBI Taxonomy" id="3847"/>
    <lineage>
        <taxon>Eukaryota</taxon>
        <taxon>Viridiplantae</taxon>
        <taxon>Streptophyta</taxon>
        <taxon>Embryophyta</taxon>
        <taxon>Tracheophyta</taxon>
        <taxon>Spermatophyta</taxon>
        <taxon>Magnoliopsida</taxon>
        <taxon>eudicotyledons</taxon>
        <taxon>Gunneridae</taxon>
        <taxon>Pentapetalae</taxon>
        <taxon>rosids</taxon>
        <taxon>fabids</taxon>
        <taxon>Fabales</taxon>
        <taxon>Fabaceae</taxon>
        <taxon>Papilionoideae</taxon>
        <taxon>50 kb inversion clade</taxon>
        <taxon>NPAAA clade</taxon>
        <taxon>indigoferoid/millettioid clade</taxon>
        <taxon>Phaseoleae</taxon>
        <taxon>Glycine</taxon>
        <taxon>Glycine subgen. Soja</taxon>
    </lineage>
</organism>
<reference key="1">
    <citation type="journal article" date="2006" name="Plant Cell">
        <title>The Arabidopsis vitamin E pathway gene5-1 mutant reveals a critical role for phytol kinase in seed tocopherol biosynthesis.</title>
        <authorList>
            <person name="Valentin H.E."/>
            <person name="Lincoln K."/>
            <person name="Moshiri F."/>
            <person name="Jensen P.K."/>
            <person name="Qi Q."/>
            <person name="Venkatesh T.V."/>
            <person name="Karunanandaa B."/>
            <person name="Baszis S.R."/>
            <person name="Norris S.R."/>
            <person name="Savidge B."/>
            <person name="Gruys K.J."/>
            <person name="Last R.L."/>
        </authorList>
    </citation>
    <scope>NUCLEOTIDE SEQUENCE [MRNA]</scope>
</reference>
<protein>
    <recommendedName>
        <fullName>Probable phytol kinase 3, chloroplastic</fullName>
        <ecNumber>2.7.1.182</ecNumber>
    </recommendedName>
</protein>
<comment type="function">
    <text evidence="1">Involved in the activation and reutilization of phytol from chlorophyll degradation in plant metabolism, including tocopherol biosynthesis. Catalyzes the conversion of phytol to phytol monophosphate (PMP) (By similarity).</text>
</comment>
<comment type="catalytic activity">
    <reaction>
        <text>phytol + CTP = phytyl phosphate + CDP + H(+)</text>
        <dbReference type="Rhea" id="RHEA:38055"/>
        <dbReference type="ChEBI" id="CHEBI:15378"/>
        <dbReference type="ChEBI" id="CHEBI:17327"/>
        <dbReference type="ChEBI" id="CHEBI:37563"/>
        <dbReference type="ChEBI" id="CHEBI:58069"/>
        <dbReference type="ChEBI" id="CHEBI:75483"/>
        <dbReference type="EC" id="2.7.1.182"/>
    </reaction>
</comment>
<comment type="pathway">
    <text>Cofactor biosynthesis; tocopherol biosynthesis.</text>
</comment>
<comment type="subcellular location">
    <subcellularLocation>
        <location evidence="3">Plastid</location>
        <location evidence="3">Chloroplast membrane</location>
        <topology evidence="3">Multi-pass membrane protein</topology>
    </subcellularLocation>
</comment>
<comment type="similarity">
    <text evidence="3">Belongs to the polyprenol kinase family.</text>
</comment>
<keyword id="KW-0150">Chloroplast</keyword>
<keyword id="KW-0418">Kinase</keyword>
<keyword id="KW-0472">Membrane</keyword>
<keyword id="KW-0934">Plastid</keyword>
<keyword id="KW-1185">Reference proteome</keyword>
<keyword id="KW-0808">Transferase</keyword>
<keyword id="KW-0809">Transit peptide</keyword>
<keyword id="KW-0812">Transmembrane</keyword>
<keyword id="KW-1133">Transmembrane helix</keyword>
<dbReference type="EC" id="2.7.1.182"/>
<dbReference type="EMBL" id="DQ163028">
    <property type="protein sequence ID" value="ABA42677.1"/>
    <property type="molecule type" value="mRNA"/>
</dbReference>
<dbReference type="RefSeq" id="NP_001242263.1">
    <property type="nucleotide sequence ID" value="NM_001255334.2"/>
</dbReference>
<dbReference type="FunCoup" id="Q2N2K0">
    <property type="interactions" value="42"/>
</dbReference>
<dbReference type="STRING" id="3847.Q2N2K0"/>
<dbReference type="PaxDb" id="3847-GLYMA18G06710.1"/>
<dbReference type="GeneID" id="100793696"/>
<dbReference type="KEGG" id="gmx:100793696"/>
<dbReference type="eggNOG" id="KOG4453">
    <property type="taxonomic scope" value="Eukaryota"/>
</dbReference>
<dbReference type="InParanoid" id="Q2N2K0"/>
<dbReference type="OrthoDB" id="5673at2759"/>
<dbReference type="UniPathway" id="UPA00160"/>
<dbReference type="Proteomes" id="UP000008827">
    <property type="component" value="Unplaced"/>
</dbReference>
<dbReference type="GO" id="GO:0031969">
    <property type="term" value="C:chloroplast membrane"/>
    <property type="evidence" value="ECO:0007669"/>
    <property type="project" value="UniProtKB-SubCell"/>
</dbReference>
<dbReference type="GO" id="GO:0016301">
    <property type="term" value="F:kinase activity"/>
    <property type="evidence" value="ECO:0000318"/>
    <property type="project" value="GO_Central"/>
</dbReference>
<dbReference type="GO" id="GO:0010276">
    <property type="term" value="F:phytol kinase activity"/>
    <property type="evidence" value="ECO:0007669"/>
    <property type="project" value="UniProtKB-EC"/>
</dbReference>
<dbReference type="GO" id="GO:0010189">
    <property type="term" value="P:vitamin E biosynthetic process"/>
    <property type="evidence" value="ECO:0007669"/>
    <property type="project" value="UniProtKB-UniPathway"/>
</dbReference>
<dbReference type="InterPro" id="IPR039606">
    <property type="entry name" value="Phytol/farnesol_kinase"/>
</dbReference>
<dbReference type="PANTHER" id="PTHR32523:SF7">
    <property type="entry name" value="FARNESOL KINASE, CHLOROPLASTIC"/>
    <property type="match status" value="1"/>
</dbReference>
<dbReference type="PANTHER" id="PTHR32523">
    <property type="entry name" value="PHYTOL KINASE 1, CHLOROPLASTIC"/>
    <property type="match status" value="1"/>
</dbReference>
<name>PHYK3_SOYBN</name>
<sequence length="319" mass="34881">MMFLSFNMISGGNTLQRFDPVACVSSVPLLLAPTTRPTFHFPSPFLSKPKPTYLFTSFSSSSSSSSSFFSSTTPPRSTMLHHDPLVSDVYATAISGVVALSFLRLFQETAKRDLFDQKLNRKLVHISIGLIFMLCXPLFSTETWASFFAALIPGINIFRMLVIGLGILKDEATVKSMSRFGDYRELLKGPLYYAATITLAAIIYWRTSPISIAAICNLCAGDGMADIVGRRLGGEKIPYNKNKSFAGSIAMATAGFLTSIGYMWYFSSFGFIEGSWKLVLGFLLVSIVTAFVESLPISTELDDNLTVPLTSILVGSIIL</sequence>
<feature type="transit peptide" description="Chloroplast" evidence="2">
    <location>
        <begin position="1"/>
        <end position="22"/>
    </location>
</feature>
<feature type="chain" id="PRO_0000226595" description="Probable phytol kinase 3, chloroplastic">
    <location>
        <begin position="23"/>
        <end position="319"/>
    </location>
</feature>
<feature type="transmembrane region" description="Helical" evidence="2">
    <location>
        <begin position="83"/>
        <end position="103"/>
    </location>
</feature>
<feature type="transmembrane region" description="Helical" evidence="2">
    <location>
        <begin position="123"/>
        <end position="143"/>
    </location>
</feature>
<feature type="transmembrane region" description="Helical" evidence="2">
    <location>
        <begin position="147"/>
        <end position="167"/>
    </location>
</feature>
<feature type="transmembrane region" description="Helical" evidence="2">
    <location>
        <begin position="185"/>
        <end position="205"/>
    </location>
</feature>
<feature type="transmembrane region" description="Helical" evidence="2">
    <location>
        <begin position="252"/>
        <end position="272"/>
    </location>
</feature>
<feature type="transmembrane region" description="Helical" evidence="2">
    <location>
        <begin position="278"/>
        <end position="298"/>
    </location>
</feature>